<gene>
    <name type="primary">btr</name>
    <name type="synonym">ybbB</name>
    <name type="synonym">yzbC</name>
    <name type="ordered locus">BSU01640</name>
</gene>
<dbReference type="EMBL" id="L19954">
    <property type="protein sequence ID" value="AAA64353.1"/>
    <property type="molecule type" value="Genomic_DNA"/>
</dbReference>
<dbReference type="EMBL" id="AB002150">
    <property type="protein sequence ID" value="BAA19497.1"/>
    <property type="molecule type" value="Genomic_DNA"/>
</dbReference>
<dbReference type="EMBL" id="AL009126">
    <property type="protein sequence ID" value="CAB11940.1"/>
    <property type="molecule type" value="Genomic_DNA"/>
</dbReference>
<dbReference type="PIR" id="I39841">
    <property type="entry name" value="I39841"/>
</dbReference>
<dbReference type="RefSeq" id="NP_388045.1">
    <property type="nucleotide sequence ID" value="NC_000964.3"/>
</dbReference>
<dbReference type="RefSeq" id="WP_003234977.1">
    <property type="nucleotide sequence ID" value="NZ_OZ025638.1"/>
</dbReference>
<dbReference type="SMR" id="P40408"/>
<dbReference type="FunCoup" id="P40408">
    <property type="interactions" value="32"/>
</dbReference>
<dbReference type="IntAct" id="P40408">
    <property type="interactions" value="1"/>
</dbReference>
<dbReference type="STRING" id="224308.BSU01640"/>
<dbReference type="PaxDb" id="224308-BSU01640"/>
<dbReference type="EnsemblBacteria" id="CAB11940">
    <property type="protein sequence ID" value="CAB11940"/>
    <property type="gene ID" value="BSU_01640"/>
</dbReference>
<dbReference type="GeneID" id="938888"/>
<dbReference type="KEGG" id="bsu:BSU01640"/>
<dbReference type="PATRIC" id="fig|224308.179.peg.170"/>
<dbReference type="eggNOG" id="COG0614">
    <property type="taxonomic scope" value="Bacteria"/>
</dbReference>
<dbReference type="eggNOG" id="COG2207">
    <property type="taxonomic scope" value="Bacteria"/>
</dbReference>
<dbReference type="InParanoid" id="P40408"/>
<dbReference type="OrthoDB" id="9807321at2"/>
<dbReference type="BioCyc" id="BSUB:BSU01640-MONOMER"/>
<dbReference type="Proteomes" id="UP000001570">
    <property type="component" value="Chromosome"/>
</dbReference>
<dbReference type="GO" id="GO:0005737">
    <property type="term" value="C:cytoplasm"/>
    <property type="evidence" value="ECO:0007669"/>
    <property type="project" value="UniProtKB-SubCell"/>
</dbReference>
<dbReference type="GO" id="GO:0003700">
    <property type="term" value="F:DNA-binding transcription factor activity"/>
    <property type="evidence" value="ECO:0007669"/>
    <property type="project" value="InterPro"/>
</dbReference>
<dbReference type="GO" id="GO:0043565">
    <property type="term" value="F:sequence-specific DNA binding"/>
    <property type="evidence" value="ECO:0007669"/>
    <property type="project" value="InterPro"/>
</dbReference>
<dbReference type="CDD" id="cd01138">
    <property type="entry name" value="FeuA"/>
    <property type="match status" value="1"/>
</dbReference>
<dbReference type="Gene3D" id="1.10.10.60">
    <property type="entry name" value="Homeodomain-like"/>
    <property type="match status" value="2"/>
</dbReference>
<dbReference type="Gene3D" id="3.40.50.1980">
    <property type="entry name" value="Nitrogenase molybdenum iron protein domain"/>
    <property type="match status" value="2"/>
</dbReference>
<dbReference type="InterPro" id="IPR002491">
    <property type="entry name" value="ABC_transptr_periplasmic_BD"/>
</dbReference>
<dbReference type="InterPro" id="IPR009057">
    <property type="entry name" value="Homeodomain-like_sf"/>
</dbReference>
<dbReference type="InterPro" id="IPR018060">
    <property type="entry name" value="HTH_AraC"/>
</dbReference>
<dbReference type="InterPro" id="IPR018062">
    <property type="entry name" value="HTH_AraC-typ_CS"/>
</dbReference>
<dbReference type="InterPro" id="IPR020449">
    <property type="entry name" value="Tscrpt_reg_AraC-type_HTH"/>
</dbReference>
<dbReference type="PANTHER" id="PTHR43280">
    <property type="entry name" value="ARAC-FAMILY TRANSCRIPTIONAL REGULATOR"/>
    <property type="match status" value="1"/>
</dbReference>
<dbReference type="PANTHER" id="PTHR43280:SF28">
    <property type="entry name" value="HTH-TYPE TRANSCRIPTIONAL ACTIVATOR RHAS"/>
    <property type="match status" value="1"/>
</dbReference>
<dbReference type="Pfam" id="PF12833">
    <property type="entry name" value="HTH_18"/>
    <property type="match status" value="1"/>
</dbReference>
<dbReference type="Pfam" id="PF01497">
    <property type="entry name" value="Peripla_BP_2"/>
    <property type="match status" value="1"/>
</dbReference>
<dbReference type="PRINTS" id="PR00032">
    <property type="entry name" value="HTHARAC"/>
</dbReference>
<dbReference type="SMART" id="SM00342">
    <property type="entry name" value="HTH_ARAC"/>
    <property type="match status" value="1"/>
</dbReference>
<dbReference type="SUPFAM" id="SSF53807">
    <property type="entry name" value="Helical backbone' metal receptor"/>
    <property type="match status" value="1"/>
</dbReference>
<dbReference type="SUPFAM" id="SSF46689">
    <property type="entry name" value="Homeodomain-like"/>
    <property type="match status" value="2"/>
</dbReference>
<dbReference type="PROSITE" id="PS50983">
    <property type="entry name" value="FE_B12_PBP"/>
    <property type="match status" value="1"/>
</dbReference>
<dbReference type="PROSITE" id="PS00041">
    <property type="entry name" value="HTH_ARAC_FAMILY_1"/>
    <property type="match status" value="1"/>
</dbReference>
<dbReference type="PROSITE" id="PS01124">
    <property type="entry name" value="HTH_ARAC_FAMILY_2"/>
    <property type="match status" value="1"/>
</dbReference>
<evidence type="ECO:0000255" key="1">
    <source>
        <dbReference type="PROSITE-ProRule" id="PRU00344"/>
    </source>
</evidence>
<evidence type="ECO:0000255" key="2">
    <source>
        <dbReference type="PROSITE-ProRule" id="PRU00593"/>
    </source>
</evidence>
<evidence type="ECO:0000269" key="3">
    <source>
    </source>
</evidence>
<evidence type="ECO:0000269" key="4">
    <source>
    </source>
</evidence>
<evidence type="ECO:0000305" key="5"/>
<proteinExistence type="evidence at protein level"/>
<reference key="1">
    <citation type="journal article" date="1994" name="Biochim. Biophys. Acta">
        <title>Isolation of Tn917 insertional mutants of Bacillus subtilis that are resistant to the protonophore carbonyl cyanide m-chlorophenylhydrazone.</title>
        <authorList>
            <person name="Quirk P.G."/>
            <person name="Guffanti A.A."/>
            <person name="Clejan S."/>
            <person name="Cheng J."/>
            <person name="Krulwich T.A."/>
        </authorList>
    </citation>
    <scope>NUCLEOTIDE SEQUENCE [GENOMIC DNA]</scope>
    <source>
        <strain>BD99 / MS94</strain>
    </source>
</reference>
<reference key="2">
    <citation type="journal article" date="1997" name="Microbiology">
        <title>Sequence and analysis of a 31 kb segment of the Bacillus subtilis chromosome in the area of the rrnH and rrnG operons.</title>
        <authorList>
            <person name="Liu H."/>
            <person name="Haga K."/>
            <person name="Yasumoto K."/>
            <person name="Ohashi Y."/>
            <person name="Yoshikawa H."/>
            <person name="Takahashi H."/>
        </authorList>
    </citation>
    <scope>NUCLEOTIDE SEQUENCE [GENOMIC DNA]</scope>
    <source>
        <strain>168</strain>
    </source>
</reference>
<reference key="3">
    <citation type="journal article" date="1997" name="Nature">
        <title>The complete genome sequence of the Gram-positive bacterium Bacillus subtilis.</title>
        <authorList>
            <person name="Kunst F."/>
            <person name="Ogasawara N."/>
            <person name="Moszer I."/>
            <person name="Albertini A.M."/>
            <person name="Alloni G."/>
            <person name="Azevedo V."/>
            <person name="Bertero M.G."/>
            <person name="Bessieres P."/>
            <person name="Bolotin A."/>
            <person name="Borchert S."/>
            <person name="Borriss R."/>
            <person name="Boursier L."/>
            <person name="Brans A."/>
            <person name="Braun M."/>
            <person name="Brignell S.C."/>
            <person name="Bron S."/>
            <person name="Brouillet S."/>
            <person name="Bruschi C.V."/>
            <person name="Caldwell B."/>
            <person name="Capuano V."/>
            <person name="Carter N.M."/>
            <person name="Choi S.-K."/>
            <person name="Codani J.-J."/>
            <person name="Connerton I.F."/>
            <person name="Cummings N.J."/>
            <person name="Daniel R.A."/>
            <person name="Denizot F."/>
            <person name="Devine K.M."/>
            <person name="Duesterhoeft A."/>
            <person name="Ehrlich S.D."/>
            <person name="Emmerson P.T."/>
            <person name="Entian K.-D."/>
            <person name="Errington J."/>
            <person name="Fabret C."/>
            <person name="Ferrari E."/>
            <person name="Foulger D."/>
            <person name="Fritz C."/>
            <person name="Fujita M."/>
            <person name="Fujita Y."/>
            <person name="Fuma S."/>
            <person name="Galizzi A."/>
            <person name="Galleron N."/>
            <person name="Ghim S.-Y."/>
            <person name="Glaser P."/>
            <person name="Goffeau A."/>
            <person name="Golightly E.J."/>
            <person name="Grandi G."/>
            <person name="Guiseppi G."/>
            <person name="Guy B.J."/>
            <person name="Haga K."/>
            <person name="Haiech J."/>
            <person name="Harwood C.R."/>
            <person name="Henaut A."/>
            <person name="Hilbert H."/>
            <person name="Holsappel S."/>
            <person name="Hosono S."/>
            <person name="Hullo M.-F."/>
            <person name="Itaya M."/>
            <person name="Jones L.-M."/>
            <person name="Joris B."/>
            <person name="Karamata D."/>
            <person name="Kasahara Y."/>
            <person name="Klaerr-Blanchard M."/>
            <person name="Klein C."/>
            <person name="Kobayashi Y."/>
            <person name="Koetter P."/>
            <person name="Koningstein G."/>
            <person name="Krogh S."/>
            <person name="Kumano M."/>
            <person name="Kurita K."/>
            <person name="Lapidus A."/>
            <person name="Lardinois S."/>
            <person name="Lauber J."/>
            <person name="Lazarevic V."/>
            <person name="Lee S.-M."/>
            <person name="Levine A."/>
            <person name="Liu H."/>
            <person name="Masuda S."/>
            <person name="Mauel C."/>
            <person name="Medigue C."/>
            <person name="Medina N."/>
            <person name="Mellado R.P."/>
            <person name="Mizuno M."/>
            <person name="Moestl D."/>
            <person name="Nakai S."/>
            <person name="Noback M."/>
            <person name="Noone D."/>
            <person name="O'Reilly M."/>
            <person name="Ogawa K."/>
            <person name="Ogiwara A."/>
            <person name="Oudega B."/>
            <person name="Park S.-H."/>
            <person name="Parro V."/>
            <person name="Pohl T.M."/>
            <person name="Portetelle D."/>
            <person name="Porwollik S."/>
            <person name="Prescott A.M."/>
            <person name="Presecan E."/>
            <person name="Pujic P."/>
            <person name="Purnelle B."/>
            <person name="Rapoport G."/>
            <person name="Rey M."/>
            <person name="Reynolds S."/>
            <person name="Rieger M."/>
            <person name="Rivolta C."/>
            <person name="Rocha E."/>
            <person name="Roche B."/>
            <person name="Rose M."/>
            <person name="Sadaie Y."/>
            <person name="Sato T."/>
            <person name="Scanlan E."/>
            <person name="Schleich S."/>
            <person name="Schroeter R."/>
            <person name="Scoffone F."/>
            <person name="Sekiguchi J."/>
            <person name="Sekowska A."/>
            <person name="Seror S.J."/>
            <person name="Serror P."/>
            <person name="Shin B.-S."/>
            <person name="Soldo B."/>
            <person name="Sorokin A."/>
            <person name="Tacconi E."/>
            <person name="Takagi T."/>
            <person name="Takahashi H."/>
            <person name="Takemaru K."/>
            <person name="Takeuchi M."/>
            <person name="Tamakoshi A."/>
            <person name="Tanaka T."/>
            <person name="Terpstra P."/>
            <person name="Tognoni A."/>
            <person name="Tosato V."/>
            <person name="Uchiyama S."/>
            <person name="Vandenbol M."/>
            <person name="Vannier F."/>
            <person name="Vassarotti A."/>
            <person name="Viari A."/>
            <person name="Wambutt R."/>
            <person name="Wedler E."/>
            <person name="Wedler H."/>
            <person name="Weitzenegger T."/>
            <person name="Winters P."/>
            <person name="Wipat A."/>
            <person name="Yamamoto H."/>
            <person name="Yamane K."/>
            <person name="Yasumoto K."/>
            <person name="Yata K."/>
            <person name="Yoshida K."/>
            <person name="Yoshikawa H.-F."/>
            <person name="Zumstein E."/>
            <person name="Yoshikawa H."/>
            <person name="Danchin A."/>
        </authorList>
    </citation>
    <scope>NUCLEOTIDE SEQUENCE [LARGE SCALE GENOMIC DNA]</scope>
    <source>
        <strain>168</strain>
    </source>
</reference>
<reference key="4">
    <citation type="journal article" date="2002" name="Mol. Microbiol.">
        <title>Global analysis of the Bacillus subtilis Fur regulon and the iron starvation stimulon.</title>
        <authorList>
            <person name="Baichoo N."/>
            <person name="Wang T."/>
            <person name="Ye R."/>
            <person name="Helmann J.D."/>
        </authorList>
    </citation>
    <scope>INDUCTION</scope>
    <source>
        <strain>168</strain>
    </source>
</reference>
<reference key="5">
    <citation type="journal article" date="2007" name="Mol. Microbiol.">
        <title>Substrate induction of siderophore transport in Bacillus subtilis mediated by a novel one-component regulator.</title>
        <authorList>
            <person name="Gaballa A."/>
            <person name="Helmann J.D."/>
        </authorList>
    </citation>
    <scope>FUNCTION</scope>
    <scope>DNA-BINDING</scope>
    <scope>INTERACTION WITH BACILLIBACTIN</scope>
    <source>
        <strain>168 / CU1065</strain>
    </source>
</reference>
<keyword id="KW-0010">Activator</keyword>
<keyword id="KW-0963">Cytoplasm</keyword>
<keyword id="KW-0238">DNA-binding</keyword>
<keyword id="KW-1185">Reference proteome</keyword>
<keyword id="KW-0804">Transcription</keyword>
<keyword id="KW-0805">Transcription regulation</keyword>
<feature type="chain" id="PRO_0000194622" description="HTH-type transcriptional activator Btr">
    <location>
        <begin position="1"/>
        <end position="529"/>
    </location>
</feature>
<feature type="domain" description="Fe/B12 periplasmic-binding" evidence="1">
    <location>
        <begin position="268"/>
        <end position="528"/>
    </location>
</feature>
<feature type="DNA-binding region" description="H-T-H motif" evidence="2">
    <location>
        <begin position="182"/>
        <end position="201"/>
    </location>
</feature>
<name>BTR_BACSU</name>
<organism>
    <name type="scientific">Bacillus subtilis (strain 168)</name>
    <dbReference type="NCBI Taxonomy" id="224308"/>
    <lineage>
        <taxon>Bacteria</taxon>
        <taxon>Bacillati</taxon>
        <taxon>Bacillota</taxon>
        <taxon>Bacilli</taxon>
        <taxon>Bacillales</taxon>
        <taxon>Bacillaceae</taxon>
        <taxon>Bacillus</taxon>
    </lineage>
</organism>
<comment type="function">
    <text evidence="4">In iron-limited conditions, activates expression of the feuABCybbA operon, which encodes the bacillibactin uptake system. Acts by binding directly to a conserved direct repeat element upstream of the feuA promoter. Activity is increased in the presence of bacillibactin.</text>
</comment>
<comment type="subunit">
    <text>Binds with high affinity to both apo-bacillibactin and iron-bacillibactin.</text>
</comment>
<comment type="subcellular location">
    <subcellularLocation>
        <location evidence="5">Cytoplasm</location>
    </subcellularLocation>
</comment>
<comment type="induction">
    <text evidence="3">Repressed by Fur in the presence of iron.</text>
</comment>
<protein>
    <recommendedName>
        <fullName>HTH-type transcriptional activator Btr</fullName>
    </recommendedName>
    <alternativeName>
        <fullName>Bacillibactin transport regulator</fullName>
    </alternativeName>
</protein>
<sequence length="529" mass="60763">MQNAVIYQPVQIEYLKKTSDLFSEQQLADSFVLIFHLKGNGYISIGTNTNPLQKKTLYVCPPNETFGFTPAADGHIDACIIRLLSYIKETGQDIFTPCTESELAKLKLMNVSHIENLAVRLQELAALWNESSQLSQLKCVIEVQSLIYDLFTASLSDQTDTHSAIEKTKHYIETHADTKITLAQLSQMAGISAKHYSESFKKWTGQSVTEFITKTRITKAKRLMAKSNCKLKEIAHQTGYQDEFYFSRIFKKYTGCSPTSYMKKRRKKIAAYGRGTMGHLIPLHHIPFAAALHPKWTSYYYQHYSTDIPVQLSAYRFNEKWEENLYTLSQAEPDVIVSMDSISPEEQDRLNRIAEVMYLPSEESWRTHFLQTASFLKEESEAEKWLADYDQQTTAAKKTLQHVQGLRFLFLRLHKQNFYLAHNRSVREVFFGDLGFSSATTADTPSEQAISLENIANYQADCMMLFLFKEPETIAYYQQLQQTEAWQNLSAVRDNRVYLLSLDPWNEYSACGHERIVQQTVSLLSGDCP</sequence>
<accession>P40408</accession>